<reference key="1">
    <citation type="journal article" date="2013" name="Genome Announc.">
        <title>Draft genome sequence of MKD8, a conjugal recipient Mycobacterium smegmatis strain.</title>
        <authorList>
            <person name="Gray T.A."/>
            <person name="Palumbo M.J."/>
            <person name="Derbyshire K.M."/>
        </authorList>
    </citation>
    <scope>NUCLEOTIDE SEQUENCE [LARGE SCALE GENOMIC DNA]</scope>
    <source>
        <strain>MKD8</strain>
    </source>
</reference>
<reference key="2">
    <citation type="submission" date="2018-03" db="EMBL/GenBank/DDBJ databases">
        <authorList>
            <person name="Derbyshire K."/>
            <person name="Gray T.A."/>
            <person name="Champion M."/>
        </authorList>
    </citation>
    <scope>NUCLEOTIDE SEQUENCE [LARGE SCALE GENOMIC DNA]</scope>
    <source>
        <strain>MKD8</strain>
    </source>
</reference>
<reference key="3">
    <citation type="journal article" date="2008" name="Mol. Microbiol.">
        <title>The specialized secretory apparatus ESX-1 is essential for DNA transfer in Mycobacterium smegmatis.</title>
        <authorList>
            <person name="Coros A."/>
            <person name="Callahan B."/>
            <person name="Battaglioli E."/>
            <person name="Derbyshire K.M."/>
        </authorList>
    </citation>
    <scope>FUNCTION</scope>
    <scope>DISRUPTION PHENOTYPE</scope>
    <source>
        <strain>ATCC 700084 / mc(2)155</strain>
        <strain>MKD8</strain>
    </source>
</reference>
<dbReference type="EMBL" id="CP027541">
    <property type="protein sequence ID" value="AWT51047.1"/>
    <property type="molecule type" value="Genomic_DNA"/>
</dbReference>
<dbReference type="RefSeq" id="WP_003891383.1">
    <property type="nucleotide sequence ID" value="NZ_CP027541.1"/>
</dbReference>
<dbReference type="SMR" id="L8FL29"/>
<dbReference type="PATRIC" id="fig|1214915.3.peg.56"/>
<dbReference type="HOGENOM" id="CLU_173991_0_0_11"/>
<dbReference type="Proteomes" id="UP000011200">
    <property type="component" value="Chromosome"/>
</dbReference>
<dbReference type="GO" id="GO:0009306">
    <property type="term" value="P:protein secretion"/>
    <property type="evidence" value="ECO:0007669"/>
    <property type="project" value="InterPro"/>
</dbReference>
<dbReference type="InterPro" id="IPR022536">
    <property type="entry name" value="EspC"/>
</dbReference>
<dbReference type="Pfam" id="PF10824">
    <property type="entry name" value="T7SS_ESX_EspC"/>
    <property type="match status" value="1"/>
</dbReference>
<evidence type="ECO:0000269" key="1">
    <source>
    </source>
</evidence>
<evidence type="ECO:0000303" key="2">
    <source>
    </source>
</evidence>
<evidence type="ECO:0000305" key="3"/>
<evidence type="ECO:0000305" key="4">
    <source>
    </source>
</evidence>
<evidence type="ECO:0000312" key="5">
    <source>
        <dbReference type="EMBL" id="AWT51047.1"/>
    </source>
</evidence>
<gene>
    <name evidence="2" type="ORF">0056</name>
    <name evidence="5" type="ORF">D806_000530</name>
    <name type="ORF">D806_0056</name>
</gene>
<comment type="function">
    <text evidence="1">May be involved in assembly of the ESX-1 / type VII specialized secretion system (T7SS), which exports several proteins including EsxA and EsxB (Probable). Involved in DNA conjugation, in at least recipient strain (PubMed:18554329).</text>
</comment>
<comment type="disruption phenotype">
    <text evidence="1">Loss of DNA conjugation when disrupted in recipient strain, strain does not secrete EsxB (PubMed:18554329).</text>
</comment>
<comment type="miscellaneous">
    <text evidence="4">DNA conjugation in M.smegmatis is unidirectional with distinct donor and recipient strains; mc(2)155 is a donor strain while MKD8 is a recipient strain. Mutations in a donor strain that alter DNA transfer do not always alter DNA transfer in a recipient strain.</text>
</comment>
<comment type="similarity">
    <text evidence="3">Belongs to the EspC family.</text>
</comment>
<organism>
    <name type="scientific">Mycolicibacterium smegmatis (strain MKD8)</name>
    <name type="common">Mycobacterium smegmatis</name>
    <dbReference type="NCBI Taxonomy" id="1214915"/>
    <lineage>
        <taxon>Bacteria</taxon>
        <taxon>Bacillati</taxon>
        <taxon>Actinomycetota</taxon>
        <taxon>Actinomycetes</taxon>
        <taxon>Mycobacteriales</taxon>
        <taxon>Mycobacteriaceae</taxon>
        <taxon>Mycolicibacterium</taxon>
    </lineage>
</organism>
<protein>
    <recommendedName>
        <fullName>Uncharacterized EspC-like protein D806_0056</fullName>
    </recommendedName>
</protein>
<feature type="chain" id="PRO_0000438356" description="Uncharacterized EspC-like protein D806_0056">
    <location>
        <begin position="1"/>
        <end position="105"/>
    </location>
</feature>
<sequence>MSDDLRVTTAHLRELSAKQGRAAAELATATAVVDGVDTALRFTHGPISWGTAAAVEAVQHARRAAGTGMVKVSQELETKLDTAAGRYHRTDSTMGDALDETIQPR</sequence>
<proteinExistence type="inferred from homology"/>
<name>Y56_MYCSE</name>
<accession>L8FL29</accession>
<accession>A0A2U9PH48</accession>